<sequence>MKFEAVVRTELGKGASRRLRLAGQFPAVVYGGEAAPVAVALNHDDIVNQMDKPEFYEAITLVIGGEEVKVKPQDVQRHAFKPKVEHMDFIRI</sequence>
<protein>
    <recommendedName>
        <fullName evidence="1">Large ribosomal subunit protein bL25</fullName>
    </recommendedName>
    <alternativeName>
        <fullName evidence="2">50S ribosomal protein L25</fullName>
    </alternativeName>
</protein>
<dbReference type="EMBL" id="AE016795">
    <property type="protein sequence ID" value="AAO11186.1"/>
    <property type="molecule type" value="Genomic_DNA"/>
</dbReference>
<dbReference type="RefSeq" id="WP_011080674.1">
    <property type="nucleotide sequence ID" value="NC_004459.3"/>
</dbReference>
<dbReference type="PDB" id="5IZN">
    <property type="method" value="X-ray"/>
    <property type="resolution" value="2.35 A"/>
    <property type="chains" value="A/B/C/D/E/F/G/H=1-92"/>
</dbReference>
<dbReference type="PDBsum" id="5IZN"/>
<dbReference type="SMR" id="Q8D8W6"/>
<dbReference type="KEGG" id="vvu:VV1_2850"/>
<dbReference type="HOGENOM" id="CLU_137946_0_0_6"/>
<dbReference type="Proteomes" id="UP000002275">
    <property type="component" value="Chromosome 1"/>
</dbReference>
<dbReference type="GO" id="GO:0022625">
    <property type="term" value="C:cytosolic large ribosomal subunit"/>
    <property type="evidence" value="ECO:0007669"/>
    <property type="project" value="TreeGrafter"/>
</dbReference>
<dbReference type="GO" id="GO:0008097">
    <property type="term" value="F:5S rRNA binding"/>
    <property type="evidence" value="ECO:0007669"/>
    <property type="project" value="InterPro"/>
</dbReference>
<dbReference type="GO" id="GO:0003735">
    <property type="term" value="F:structural constituent of ribosome"/>
    <property type="evidence" value="ECO:0007669"/>
    <property type="project" value="InterPro"/>
</dbReference>
<dbReference type="GO" id="GO:0006412">
    <property type="term" value="P:translation"/>
    <property type="evidence" value="ECO:0007669"/>
    <property type="project" value="UniProtKB-UniRule"/>
</dbReference>
<dbReference type="CDD" id="cd00495">
    <property type="entry name" value="Ribosomal_L25_TL5_CTC"/>
    <property type="match status" value="1"/>
</dbReference>
<dbReference type="FunFam" id="2.40.240.10:FF:000002">
    <property type="entry name" value="50S ribosomal protein L25"/>
    <property type="match status" value="1"/>
</dbReference>
<dbReference type="Gene3D" id="2.40.240.10">
    <property type="entry name" value="Ribosomal Protein L25, Chain P"/>
    <property type="match status" value="1"/>
</dbReference>
<dbReference type="HAMAP" id="MF_01336">
    <property type="entry name" value="Ribosomal_bL25"/>
    <property type="match status" value="1"/>
</dbReference>
<dbReference type="InterPro" id="IPR020056">
    <property type="entry name" value="Rbsml_bL25/Gln-tRNA_synth_N"/>
</dbReference>
<dbReference type="InterPro" id="IPR011035">
    <property type="entry name" value="Ribosomal_bL25/Gln-tRNA_synth"/>
</dbReference>
<dbReference type="InterPro" id="IPR020055">
    <property type="entry name" value="Ribosomal_bL25_short"/>
</dbReference>
<dbReference type="InterPro" id="IPR029751">
    <property type="entry name" value="Ribosomal_L25_dom"/>
</dbReference>
<dbReference type="InterPro" id="IPR020930">
    <property type="entry name" value="Ribosomal_uL5_bac-type"/>
</dbReference>
<dbReference type="NCBIfam" id="NF004612">
    <property type="entry name" value="PRK05943.1"/>
    <property type="match status" value="1"/>
</dbReference>
<dbReference type="PANTHER" id="PTHR33284">
    <property type="entry name" value="RIBOSOMAL PROTEIN L25/GLN-TRNA SYNTHETASE, ANTI-CODON-BINDING DOMAIN-CONTAINING PROTEIN"/>
    <property type="match status" value="1"/>
</dbReference>
<dbReference type="PANTHER" id="PTHR33284:SF1">
    <property type="entry name" value="RIBOSOMAL PROTEIN L25_GLN-TRNA SYNTHETASE, ANTI-CODON-BINDING DOMAIN-CONTAINING PROTEIN"/>
    <property type="match status" value="1"/>
</dbReference>
<dbReference type="Pfam" id="PF01386">
    <property type="entry name" value="Ribosomal_L25p"/>
    <property type="match status" value="1"/>
</dbReference>
<dbReference type="SUPFAM" id="SSF50715">
    <property type="entry name" value="Ribosomal protein L25-like"/>
    <property type="match status" value="1"/>
</dbReference>
<keyword id="KW-0002">3D-structure</keyword>
<keyword id="KW-0687">Ribonucleoprotein</keyword>
<keyword id="KW-0689">Ribosomal protein</keyword>
<keyword id="KW-0694">RNA-binding</keyword>
<keyword id="KW-0699">rRNA-binding</keyword>
<accession>Q8D8W6</accession>
<reference key="1">
    <citation type="submission" date="2002-12" db="EMBL/GenBank/DDBJ databases">
        <title>Complete genome sequence of Vibrio vulnificus CMCP6.</title>
        <authorList>
            <person name="Rhee J.H."/>
            <person name="Kim S.Y."/>
            <person name="Chung S.S."/>
            <person name="Kim J.J."/>
            <person name="Moon Y.H."/>
            <person name="Jeong H."/>
            <person name="Choy H.E."/>
        </authorList>
    </citation>
    <scope>NUCLEOTIDE SEQUENCE [LARGE SCALE GENOMIC DNA]</scope>
    <source>
        <strain>CMCP6</strain>
    </source>
</reference>
<feature type="chain" id="PRO_0000181501" description="Large ribosomal subunit protein bL25">
    <location>
        <begin position="1"/>
        <end position="92"/>
    </location>
</feature>
<feature type="strand" evidence="3">
    <location>
        <begin position="2"/>
        <end position="7"/>
    </location>
</feature>
<feature type="helix" evidence="3">
    <location>
        <begin position="15"/>
        <end position="20"/>
    </location>
</feature>
<feature type="turn" evidence="3">
    <location>
        <begin position="21"/>
        <end position="23"/>
    </location>
</feature>
<feature type="strand" evidence="3">
    <location>
        <begin position="24"/>
        <end position="30"/>
    </location>
</feature>
<feature type="strand" evidence="3">
    <location>
        <begin position="37"/>
        <end position="42"/>
    </location>
</feature>
<feature type="helix" evidence="3">
    <location>
        <begin position="43"/>
        <end position="47"/>
    </location>
</feature>
<feature type="turn" evidence="3">
    <location>
        <begin position="48"/>
        <end position="51"/>
    </location>
</feature>
<feature type="helix" evidence="3">
    <location>
        <begin position="53"/>
        <end position="56"/>
    </location>
</feature>
<feature type="strand" evidence="3">
    <location>
        <begin position="59"/>
        <end position="63"/>
    </location>
</feature>
<feature type="strand" evidence="3">
    <location>
        <begin position="66"/>
        <end position="78"/>
    </location>
</feature>
<feature type="strand" evidence="3">
    <location>
        <begin position="87"/>
        <end position="91"/>
    </location>
</feature>
<organism>
    <name type="scientific">Vibrio vulnificus (strain CMCP6)</name>
    <dbReference type="NCBI Taxonomy" id="216895"/>
    <lineage>
        <taxon>Bacteria</taxon>
        <taxon>Pseudomonadati</taxon>
        <taxon>Pseudomonadota</taxon>
        <taxon>Gammaproteobacteria</taxon>
        <taxon>Vibrionales</taxon>
        <taxon>Vibrionaceae</taxon>
        <taxon>Vibrio</taxon>
    </lineage>
</organism>
<comment type="function">
    <text evidence="1">This is one of the proteins that binds to the 5S RNA in the ribosome where it forms part of the central protuberance.</text>
</comment>
<comment type="subunit">
    <text evidence="1">Part of the 50S ribosomal subunit; part of the 5S rRNA/L5/L18/L25 subcomplex. Contacts the 5S rRNA. Binds to the 5S rRNA independently of L5 and L18.</text>
</comment>
<comment type="similarity">
    <text evidence="1">Belongs to the bacterial ribosomal protein bL25 family.</text>
</comment>
<evidence type="ECO:0000255" key="1">
    <source>
        <dbReference type="HAMAP-Rule" id="MF_01336"/>
    </source>
</evidence>
<evidence type="ECO:0000305" key="2"/>
<evidence type="ECO:0007829" key="3">
    <source>
        <dbReference type="PDB" id="5IZN"/>
    </source>
</evidence>
<gene>
    <name evidence="1" type="primary">rplY</name>
    <name type="ordered locus">VV1_2850</name>
</gene>
<name>RL25_VIBVU</name>
<proteinExistence type="evidence at protein level"/>